<evidence type="ECO:0000255" key="1">
    <source>
        <dbReference type="HAMAP-Rule" id="MF_00300"/>
    </source>
</evidence>
<evidence type="ECO:0000256" key="2">
    <source>
        <dbReference type="SAM" id="MobiDB-lite"/>
    </source>
</evidence>
<feature type="chain" id="PRO_1000115365" description="Chorismate synthase">
    <location>
        <begin position="1"/>
        <end position="385"/>
    </location>
</feature>
<feature type="region of interest" description="Disordered" evidence="2">
    <location>
        <begin position="43"/>
        <end position="63"/>
    </location>
</feature>
<feature type="region of interest" description="Disordered" evidence="2">
    <location>
        <begin position="363"/>
        <end position="385"/>
    </location>
</feature>
<feature type="compositionally biased region" description="Low complexity" evidence="2">
    <location>
        <begin position="363"/>
        <end position="372"/>
    </location>
</feature>
<feature type="binding site" evidence="1">
    <location>
        <position position="48"/>
    </location>
    <ligand>
        <name>NADP(+)</name>
        <dbReference type="ChEBI" id="CHEBI:58349"/>
    </ligand>
</feature>
<feature type="binding site" evidence="1">
    <location>
        <position position="54"/>
    </location>
    <ligand>
        <name>NADP(+)</name>
        <dbReference type="ChEBI" id="CHEBI:58349"/>
    </ligand>
</feature>
<feature type="binding site" evidence="1">
    <location>
        <begin position="125"/>
        <end position="127"/>
    </location>
    <ligand>
        <name>FMN</name>
        <dbReference type="ChEBI" id="CHEBI:58210"/>
    </ligand>
</feature>
<feature type="binding site" evidence="1">
    <location>
        <begin position="238"/>
        <end position="239"/>
    </location>
    <ligand>
        <name>FMN</name>
        <dbReference type="ChEBI" id="CHEBI:58210"/>
    </ligand>
</feature>
<feature type="binding site" evidence="1">
    <location>
        <position position="278"/>
    </location>
    <ligand>
        <name>FMN</name>
        <dbReference type="ChEBI" id="CHEBI:58210"/>
    </ligand>
</feature>
<feature type="binding site" evidence="1">
    <location>
        <begin position="293"/>
        <end position="297"/>
    </location>
    <ligand>
        <name>FMN</name>
        <dbReference type="ChEBI" id="CHEBI:58210"/>
    </ligand>
</feature>
<feature type="binding site" evidence="1">
    <location>
        <position position="319"/>
    </location>
    <ligand>
        <name>FMN</name>
        <dbReference type="ChEBI" id="CHEBI:58210"/>
    </ligand>
</feature>
<sequence>MSGSTFGLLFCVTNFGESHGPAIGCVIDGCPPGMALGEADIQPDLDRRRPGTSRHVTQRNEPDQVEILSGVYEGRTTGTPICLLIRNTDQRSKDYGNILDTFRPGHADYTYWRKYGLRDPRGGGRSSARMTAPMVAAGAVAKKWLREQHGITFTGWMSALGELPIPFEDESQIPLNPFYAPNAAVVPQLEAYMDALRKSGDSVGARIEVRARGVPAGLGEPLYDKLDADIAYAMMGINAVKGVEIGAGFASVAQRGTQHGDELTPAGFASNNAGGVLGGISTGQDLVVSIAIKPTSSIRSPKASIDRAGAPTVVETLGRHDPCVGIRATPIAEAMLALVVMDHALRQRAQCGDVQLPIPPLAAQAPRTETAPATPPLDAGDDIEA</sequence>
<name>AROC_LEPCP</name>
<protein>
    <recommendedName>
        <fullName evidence="1">Chorismate synthase</fullName>
        <shortName evidence="1">CS</shortName>
        <ecNumber evidence="1">4.2.3.5</ecNumber>
    </recommendedName>
    <alternativeName>
        <fullName evidence="1">5-enolpyruvylshikimate-3-phosphate phospholyase</fullName>
    </alternativeName>
</protein>
<dbReference type="EC" id="4.2.3.5" evidence="1"/>
<dbReference type="EMBL" id="CP001013">
    <property type="protein sequence ID" value="ACB33793.1"/>
    <property type="molecule type" value="Genomic_DNA"/>
</dbReference>
<dbReference type="RefSeq" id="WP_012346555.1">
    <property type="nucleotide sequence ID" value="NC_010524.1"/>
</dbReference>
<dbReference type="SMR" id="B1XWC5"/>
<dbReference type="STRING" id="395495.Lcho_1525"/>
<dbReference type="KEGG" id="lch:Lcho_1525"/>
<dbReference type="eggNOG" id="COG0082">
    <property type="taxonomic scope" value="Bacteria"/>
</dbReference>
<dbReference type="HOGENOM" id="CLU_034547_0_2_4"/>
<dbReference type="OrthoDB" id="9771806at2"/>
<dbReference type="UniPathway" id="UPA00053">
    <property type="reaction ID" value="UER00090"/>
</dbReference>
<dbReference type="Proteomes" id="UP000001693">
    <property type="component" value="Chromosome"/>
</dbReference>
<dbReference type="GO" id="GO:0005829">
    <property type="term" value="C:cytosol"/>
    <property type="evidence" value="ECO:0007669"/>
    <property type="project" value="TreeGrafter"/>
</dbReference>
<dbReference type="GO" id="GO:0004107">
    <property type="term" value="F:chorismate synthase activity"/>
    <property type="evidence" value="ECO:0007669"/>
    <property type="project" value="UniProtKB-UniRule"/>
</dbReference>
<dbReference type="GO" id="GO:0010181">
    <property type="term" value="F:FMN binding"/>
    <property type="evidence" value="ECO:0007669"/>
    <property type="project" value="TreeGrafter"/>
</dbReference>
<dbReference type="GO" id="GO:0008652">
    <property type="term" value="P:amino acid biosynthetic process"/>
    <property type="evidence" value="ECO:0007669"/>
    <property type="project" value="UniProtKB-KW"/>
</dbReference>
<dbReference type="GO" id="GO:0009073">
    <property type="term" value="P:aromatic amino acid family biosynthetic process"/>
    <property type="evidence" value="ECO:0007669"/>
    <property type="project" value="UniProtKB-KW"/>
</dbReference>
<dbReference type="GO" id="GO:0009423">
    <property type="term" value="P:chorismate biosynthetic process"/>
    <property type="evidence" value="ECO:0007669"/>
    <property type="project" value="UniProtKB-UniRule"/>
</dbReference>
<dbReference type="CDD" id="cd07304">
    <property type="entry name" value="Chorismate_synthase"/>
    <property type="match status" value="1"/>
</dbReference>
<dbReference type="Gene3D" id="3.60.150.10">
    <property type="entry name" value="Chorismate synthase AroC"/>
    <property type="match status" value="1"/>
</dbReference>
<dbReference type="HAMAP" id="MF_00300">
    <property type="entry name" value="Chorismate_synth"/>
    <property type="match status" value="1"/>
</dbReference>
<dbReference type="InterPro" id="IPR000453">
    <property type="entry name" value="Chorismate_synth"/>
</dbReference>
<dbReference type="InterPro" id="IPR035904">
    <property type="entry name" value="Chorismate_synth_AroC_sf"/>
</dbReference>
<dbReference type="InterPro" id="IPR020541">
    <property type="entry name" value="Chorismate_synthase_CS"/>
</dbReference>
<dbReference type="NCBIfam" id="TIGR00033">
    <property type="entry name" value="aroC"/>
    <property type="match status" value="1"/>
</dbReference>
<dbReference type="NCBIfam" id="NF003793">
    <property type="entry name" value="PRK05382.1"/>
    <property type="match status" value="1"/>
</dbReference>
<dbReference type="PANTHER" id="PTHR21085">
    <property type="entry name" value="CHORISMATE SYNTHASE"/>
    <property type="match status" value="1"/>
</dbReference>
<dbReference type="PANTHER" id="PTHR21085:SF0">
    <property type="entry name" value="CHORISMATE SYNTHASE"/>
    <property type="match status" value="1"/>
</dbReference>
<dbReference type="Pfam" id="PF01264">
    <property type="entry name" value="Chorismate_synt"/>
    <property type="match status" value="1"/>
</dbReference>
<dbReference type="PIRSF" id="PIRSF001456">
    <property type="entry name" value="Chorismate_synth"/>
    <property type="match status" value="1"/>
</dbReference>
<dbReference type="SUPFAM" id="SSF103263">
    <property type="entry name" value="Chorismate synthase, AroC"/>
    <property type="match status" value="1"/>
</dbReference>
<dbReference type="PROSITE" id="PS00787">
    <property type="entry name" value="CHORISMATE_SYNTHASE_1"/>
    <property type="match status" value="1"/>
</dbReference>
<dbReference type="PROSITE" id="PS00788">
    <property type="entry name" value="CHORISMATE_SYNTHASE_2"/>
    <property type="match status" value="1"/>
</dbReference>
<dbReference type="PROSITE" id="PS00789">
    <property type="entry name" value="CHORISMATE_SYNTHASE_3"/>
    <property type="match status" value="1"/>
</dbReference>
<comment type="function">
    <text evidence="1">Catalyzes the anti-1,4-elimination of the C-3 phosphate and the C-6 proR hydrogen from 5-enolpyruvylshikimate-3-phosphate (EPSP) to yield chorismate, which is the branch point compound that serves as the starting substrate for the three terminal pathways of aromatic amino acid biosynthesis. This reaction introduces a second double bond into the aromatic ring system.</text>
</comment>
<comment type="catalytic activity">
    <reaction evidence="1">
        <text>5-O-(1-carboxyvinyl)-3-phosphoshikimate = chorismate + phosphate</text>
        <dbReference type="Rhea" id="RHEA:21020"/>
        <dbReference type="ChEBI" id="CHEBI:29748"/>
        <dbReference type="ChEBI" id="CHEBI:43474"/>
        <dbReference type="ChEBI" id="CHEBI:57701"/>
        <dbReference type="EC" id="4.2.3.5"/>
    </reaction>
</comment>
<comment type="cofactor">
    <cofactor evidence="1">
        <name>FMNH2</name>
        <dbReference type="ChEBI" id="CHEBI:57618"/>
    </cofactor>
    <text evidence="1">Reduced FMN (FMNH(2)).</text>
</comment>
<comment type="pathway">
    <text evidence="1">Metabolic intermediate biosynthesis; chorismate biosynthesis; chorismate from D-erythrose 4-phosphate and phosphoenolpyruvate: step 7/7.</text>
</comment>
<comment type="subunit">
    <text evidence="1">Homotetramer.</text>
</comment>
<comment type="similarity">
    <text evidence="1">Belongs to the chorismate synthase family.</text>
</comment>
<proteinExistence type="inferred from homology"/>
<accession>B1XWC5</accession>
<organism>
    <name type="scientific">Leptothrix cholodnii (strain ATCC 51168 / LMG 8142 / SP-6)</name>
    <name type="common">Leptothrix discophora (strain SP-6)</name>
    <dbReference type="NCBI Taxonomy" id="395495"/>
    <lineage>
        <taxon>Bacteria</taxon>
        <taxon>Pseudomonadati</taxon>
        <taxon>Pseudomonadota</taxon>
        <taxon>Betaproteobacteria</taxon>
        <taxon>Burkholderiales</taxon>
        <taxon>Sphaerotilaceae</taxon>
        <taxon>Leptothrix</taxon>
    </lineage>
</organism>
<reference key="1">
    <citation type="submission" date="2008-03" db="EMBL/GenBank/DDBJ databases">
        <title>Complete sequence of Leptothrix cholodnii SP-6.</title>
        <authorList>
            <consortium name="US DOE Joint Genome Institute"/>
            <person name="Copeland A."/>
            <person name="Lucas S."/>
            <person name="Lapidus A."/>
            <person name="Glavina del Rio T."/>
            <person name="Dalin E."/>
            <person name="Tice H."/>
            <person name="Bruce D."/>
            <person name="Goodwin L."/>
            <person name="Pitluck S."/>
            <person name="Chertkov O."/>
            <person name="Brettin T."/>
            <person name="Detter J.C."/>
            <person name="Han C."/>
            <person name="Kuske C.R."/>
            <person name="Schmutz J."/>
            <person name="Larimer F."/>
            <person name="Land M."/>
            <person name="Hauser L."/>
            <person name="Kyrpides N."/>
            <person name="Lykidis A."/>
            <person name="Emerson D."/>
            <person name="Richardson P."/>
        </authorList>
    </citation>
    <scope>NUCLEOTIDE SEQUENCE [LARGE SCALE GENOMIC DNA]</scope>
    <source>
        <strain>ATCC 51168 / LMG 8142 / SP-6</strain>
    </source>
</reference>
<gene>
    <name evidence="1" type="primary">aroC</name>
    <name type="ordered locus">Lcho_1525</name>
</gene>
<keyword id="KW-0028">Amino-acid biosynthesis</keyword>
<keyword id="KW-0057">Aromatic amino acid biosynthesis</keyword>
<keyword id="KW-0274">FAD</keyword>
<keyword id="KW-0285">Flavoprotein</keyword>
<keyword id="KW-0288">FMN</keyword>
<keyword id="KW-0456">Lyase</keyword>
<keyword id="KW-0521">NADP</keyword>
<keyword id="KW-1185">Reference proteome</keyword>